<feature type="propeptide" id="PRO_0000031317" evidence="1">
    <location>
        <begin position="1"/>
        <end position="2"/>
    </location>
</feature>
<feature type="chain" id="PRO_0000031318" description="Ribulose bisphosphate carboxylase large chain">
    <location>
        <begin position="3"/>
        <end position="478"/>
    </location>
</feature>
<feature type="active site" description="Proton acceptor" evidence="1">
    <location>
        <position position="175"/>
    </location>
</feature>
<feature type="active site" description="Proton acceptor" evidence="1">
    <location>
        <position position="294"/>
    </location>
</feature>
<feature type="binding site" description="in homodimeric partner" evidence="1">
    <location>
        <position position="123"/>
    </location>
    <ligand>
        <name>substrate</name>
    </ligand>
</feature>
<feature type="binding site" evidence="1">
    <location>
        <position position="173"/>
    </location>
    <ligand>
        <name>substrate</name>
    </ligand>
</feature>
<feature type="binding site" evidence="1">
    <location>
        <position position="177"/>
    </location>
    <ligand>
        <name>substrate</name>
    </ligand>
</feature>
<feature type="binding site" description="via carbamate group" evidence="1">
    <location>
        <position position="201"/>
    </location>
    <ligand>
        <name>Mg(2+)</name>
        <dbReference type="ChEBI" id="CHEBI:18420"/>
    </ligand>
</feature>
<feature type="binding site" evidence="1">
    <location>
        <position position="203"/>
    </location>
    <ligand>
        <name>Mg(2+)</name>
        <dbReference type="ChEBI" id="CHEBI:18420"/>
    </ligand>
</feature>
<feature type="binding site" evidence="1">
    <location>
        <position position="204"/>
    </location>
    <ligand>
        <name>Mg(2+)</name>
        <dbReference type="ChEBI" id="CHEBI:18420"/>
    </ligand>
</feature>
<feature type="binding site" evidence="1">
    <location>
        <position position="295"/>
    </location>
    <ligand>
        <name>substrate</name>
    </ligand>
</feature>
<feature type="binding site" evidence="1">
    <location>
        <position position="327"/>
    </location>
    <ligand>
        <name>substrate</name>
    </ligand>
</feature>
<feature type="binding site" evidence="1">
    <location>
        <position position="379"/>
    </location>
    <ligand>
        <name>substrate</name>
    </ligand>
</feature>
<feature type="site" description="Transition state stabilizer" evidence="1">
    <location>
        <position position="334"/>
    </location>
</feature>
<feature type="modified residue" description="N-acetylproline" evidence="1">
    <location>
        <position position="3"/>
    </location>
</feature>
<feature type="modified residue" description="N6,N6,N6-trimethyllysine" evidence="1">
    <location>
        <position position="14"/>
    </location>
</feature>
<feature type="modified residue" description="N6-carboxylysine" evidence="1">
    <location>
        <position position="201"/>
    </location>
</feature>
<feature type="disulfide bond" description="Interchain; in linked form" evidence="1">
    <location>
        <position position="247"/>
    </location>
</feature>
<proteinExistence type="inferred from homology"/>
<dbReference type="EC" id="4.1.1.39" evidence="1"/>
<dbReference type="EMBL" id="X55828">
    <property type="protein sequence ID" value="CAA39354.1"/>
    <property type="molecule type" value="Genomic_DNA"/>
</dbReference>
<dbReference type="PIR" id="H34921">
    <property type="entry name" value="RKNULM"/>
</dbReference>
<dbReference type="SMR" id="P19163"/>
<dbReference type="GO" id="GO:0009507">
    <property type="term" value="C:chloroplast"/>
    <property type="evidence" value="ECO:0007669"/>
    <property type="project" value="UniProtKB-SubCell"/>
</dbReference>
<dbReference type="GO" id="GO:0000287">
    <property type="term" value="F:magnesium ion binding"/>
    <property type="evidence" value="ECO:0007669"/>
    <property type="project" value="UniProtKB-UniRule"/>
</dbReference>
<dbReference type="GO" id="GO:0004497">
    <property type="term" value="F:monooxygenase activity"/>
    <property type="evidence" value="ECO:0007669"/>
    <property type="project" value="UniProtKB-KW"/>
</dbReference>
<dbReference type="GO" id="GO:0016984">
    <property type="term" value="F:ribulose-bisphosphate carboxylase activity"/>
    <property type="evidence" value="ECO:0007669"/>
    <property type="project" value="UniProtKB-UniRule"/>
</dbReference>
<dbReference type="GO" id="GO:0009853">
    <property type="term" value="P:photorespiration"/>
    <property type="evidence" value="ECO:0007669"/>
    <property type="project" value="UniProtKB-KW"/>
</dbReference>
<dbReference type="GO" id="GO:0019253">
    <property type="term" value="P:reductive pentose-phosphate cycle"/>
    <property type="evidence" value="ECO:0007669"/>
    <property type="project" value="UniProtKB-UniRule"/>
</dbReference>
<dbReference type="CDD" id="cd08212">
    <property type="entry name" value="RuBisCO_large_I"/>
    <property type="match status" value="1"/>
</dbReference>
<dbReference type="FunFam" id="3.20.20.110:FF:000001">
    <property type="entry name" value="Ribulose bisphosphate carboxylase large chain"/>
    <property type="match status" value="1"/>
</dbReference>
<dbReference type="FunFam" id="3.30.70.150:FF:000001">
    <property type="entry name" value="Ribulose bisphosphate carboxylase large chain"/>
    <property type="match status" value="1"/>
</dbReference>
<dbReference type="Gene3D" id="3.20.20.110">
    <property type="entry name" value="Ribulose bisphosphate carboxylase, large subunit, C-terminal domain"/>
    <property type="match status" value="1"/>
</dbReference>
<dbReference type="Gene3D" id="3.30.70.150">
    <property type="entry name" value="RuBisCO large subunit, N-terminal domain"/>
    <property type="match status" value="1"/>
</dbReference>
<dbReference type="HAMAP" id="MF_01338">
    <property type="entry name" value="RuBisCO_L_type1"/>
    <property type="match status" value="1"/>
</dbReference>
<dbReference type="InterPro" id="IPR033966">
    <property type="entry name" value="RuBisCO"/>
</dbReference>
<dbReference type="InterPro" id="IPR020878">
    <property type="entry name" value="RuBisCo_large_chain_AS"/>
</dbReference>
<dbReference type="InterPro" id="IPR000685">
    <property type="entry name" value="RuBisCO_lsu_C"/>
</dbReference>
<dbReference type="InterPro" id="IPR036376">
    <property type="entry name" value="RuBisCO_lsu_C_sf"/>
</dbReference>
<dbReference type="InterPro" id="IPR017443">
    <property type="entry name" value="RuBisCO_lsu_fd_N"/>
</dbReference>
<dbReference type="InterPro" id="IPR036422">
    <property type="entry name" value="RuBisCO_lsu_N_sf"/>
</dbReference>
<dbReference type="InterPro" id="IPR020888">
    <property type="entry name" value="RuBisCO_lsuI"/>
</dbReference>
<dbReference type="NCBIfam" id="NF003252">
    <property type="entry name" value="PRK04208.1"/>
    <property type="match status" value="1"/>
</dbReference>
<dbReference type="PANTHER" id="PTHR42704">
    <property type="entry name" value="RIBULOSE BISPHOSPHATE CARBOXYLASE"/>
    <property type="match status" value="1"/>
</dbReference>
<dbReference type="PANTHER" id="PTHR42704:SF15">
    <property type="entry name" value="RIBULOSE BISPHOSPHATE CARBOXYLASE LARGE CHAIN"/>
    <property type="match status" value="1"/>
</dbReference>
<dbReference type="Pfam" id="PF00016">
    <property type="entry name" value="RuBisCO_large"/>
    <property type="match status" value="1"/>
</dbReference>
<dbReference type="Pfam" id="PF02788">
    <property type="entry name" value="RuBisCO_large_N"/>
    <property type="match status" value="1"/>
</dbReference>
<dbReference type="SFLD" id="SFLDG01052">
    <property type="entry name" value="RuBisCO"/>
    <property type="match status" value="1"/>
</dbReference>
<dbReference type="SFLD" id="SFLDS00014">
    <property type="entry name" value="RuBisCO"/>
    <property type="match status" value="1"/>
</dbReference>
<dbReference type="SFLD" id="SFLDG00301">
    <property type="entry name" value="RuBisCO-like_proteins"/>
    <property type="match status" value="1"/>
</dbReference>
<dbReference type="SUPFAM" id="SSF51649">
    <property type="entry name" value="RuBisCo, C-terminal domain"/>
    <property type="match status" value="1"/>
</dbReference>
<dbReference type="SUPFAM" id="SSF54966">
    <property type="entry name" value="RuBisCO, large subunit, small (N-terminal) domain"/>
    <property type="match status" value="1"/>
</dbReference>
<dbReference type="PROSITE" id="PS00157">
    <property type="entry name" value="RUBISCO_LARGE"/>
    <property type="match status" value="1"/>
</dbReference>
<keyword id="KW-0007">Acetylation</keyword>
<keyword id="KW-0113">Calvin cycle</keyword>
<keyword id="KW-0120">Carbon dioxide fixation</keyword>
<keyword id="KW-0150">Chloroplast</keyword>
<keyword id="KW-1015">Disulfide bond</keyword>
<keyword id="KW-0456">Lyase</keyword>
<keyword id="KW-0460">Magnesium</keyword>
<keyword id="KW-0479">Metal-binding</keyword>
<keyword id="KW-0488">Methylation</keyword>
<keyword id="KW-0503">Monooxygenase</keyword>
<keyword id="KW-0560">Oxidoreductase</keyword>
<keyword id="KW-0601">Photorespiration</keyword>
<keyword id="KW-0602">Photosynthesis</keyword>
<keyword id="KW-0934">Plastid</keyword>
<evidence type="ECO:0000255" key="1">
    <source>
        <dbReference type="HAMAP-Rule" id="MF_01338"/>
    </source>
</evidence>
<reference key="1">
    <citation type="journal article" date="1990" name="J. Biol. Chem.">
        <title>Comparisons of rbcL genes for the large subunit of ribulose-bisphosphate carboxylase from closely related C3 and C4 plant species.</title>
        <authorList>
            <person name="Hudson G.S."/>
            <person name="Mahon J.D."/>
            <person name="Anderson P.A."/>
            <person name="Gibbs M.J."/>
            <person name="Badger M.R."/>
            <person name="Andrews T.J."/>
            <person name="Whitfeld P.R."/>
        </authorList>
    </citation>
    <scope>NUCLEOTIDE SEQUENCE [GENOMIC DNA]</scope>
</reference>
<protein>
    <recommendedName>
        <fullName evidence="1">Ribulose bisphosphate carboxylase large chain</fullName>
        <shortName evidence="1">RuBisCO large subunit</shortName>
        <ecNumber evidence="1">4.1.1.39</ecNumber>
    </recommendedName>
</protein>
<sequence>MSPQTETKASVGFKAGVKDYKLTYYTPEYETKDTDILAAFRVTPQPGVPPEEAGAAVAAESSTGTWTTVWTDGLTSLDRYKGRCYHIEPVPGEEDQYICYVAYPLDLFEEGSVTNMFTSIVGNVFGFKALRALRLEDLRIPPTYSKTFQGPPHGIQVERDKLNKYGRPLLGCTIKPKLGLSAKNYGRACYECLRGGLDFTKDDENVNSQPFMRWRDRFVFCAEAIYKAQAETGEIKGHYLNATAGTCEEMMKRAAFARELGVPIVMHDYLTGGFTANTSLSMYCRDNGLLLHIHRAMHAVIDRQKNHGIHFRVLAKALRMSGGDHVHSGTVVGKLEGEREITLGFVDLLRDDFIEKDRSRGVFFTQDWVSMPGVIPVASGGIHVWHMPALTEIFGDDSVLQFGGGTLGHPWGNAPGAVANRVALEACVQARNEGRDLAREGNEIIKAACKWSPELAAACEVWKAIKFEFEPVDTVDKV</sequence>
<comment type="function">
    <text evidence="1">RuBisCO catalyzes two reactions: the carboxylation of D-ribulose 1,5-bisphosphate, the primary event in carbon dioxide fixation, as well as the oxidative fragmentation of the pentose substrate in the photorespiration process. Both reactions occur simultaneously and in competition at the same active site.</text>
</comment>
<comment type="catalytic activity">
    <reaction evidence="1">
        <text>2 (2R)-3-phosphoglycerate + 2 H(+) = D-ribulose 1,5-bisphosphate + CO2 + H2O</text>
        <dbReference type="Rhea" id="RHEA:23124"/>
        <dbReference type="ChEBI" id="CHEBI:15377"/>
        <dbReference type="ChEBI" id="CHEBI:15378"/>
        <dbReference type="ChEBI" id="CHEBI:16526"/>
        <dbReference type="ChEBI" id="CHEBI:57870"/>
        <dbReference type="ChEBI" id="CHEBI:58272"/>
        <dbReference type="EC" id="4.1.1.39"/>
    </reaction>
</comment>
<comment type="catalytic activity">
    <reaction evidence="1">
        <text>D-ribulose 1,5-bisphosphate + O2 = 2-phosphoglycolate + (2R)-3-phosphoglycerate + 2 H(+)</text>
        <dbReference type="Rhea" id="RHEA:36631"/>
        <dbReference type="ChEBI" id="CHEBI:15378"/>
        <dbReference type="ChEBI" id="CHEBI:15379"/>
        <dbReference type="ChEBI" id="CHEBI:57870"/>
        <dbReference type="ChEBI" id="CHEBI:58033"/>
        <dbReference type="ChEBI" id="CHEBI:58272"/>
    </reaction>
</comment>
<comment type="cofactor">
    <cofactor evidence="1">
        <name>Mg(2+)</name>
        <dbReference type="ChEBI" id="CHEBI:18420"/>
    </cofactor>
    <text evidence="1">Binds 1 Mg(2+) ion per subunit.</text>
</comment>
<comment type="subunit">
    <text evidence="1">Heterohexadecamer of 8 large chains and 8 small chains; disulfide-linked. The disulfide link is formed within the large subunit homodimers.</text>
</comment>
<comment type="subcellular location">
    <subcellularLocation>
        <location>Plastid</location>
        <location>Chloroplast</location>
    </subcellularLocation>
</comment>
<comment type="PTM">
    <text evidence="1">The disulfide bond which can form in the large chain dimeric partners within the hexadecamer appears to be associated with oxidative stress and protein turnover.</text>
</comment>
<comment type="miscellaneous">
    <text evidence="1">The basic functional RuBisCO is composed of a large chain homodimer in a 'head-to-tail' conformation. In form I RuBisCO this homodimer is arranged in a barrel-like tetramer with the small subunits forming a tetrameric 'cap' on each end of the 'barrel'.</text>
</comment>
<comment type="similarity">
    <text evidence="1">Belongs to the RuBisCO large chain family. Type I subfamily.</text>
</comment>
<accession>P19163</accession>
<geneLocation type="chloroplast"/>
<organism>
    <name type="scientific">Neurachne munroi</name>
    <dbReference type="NCBI Taxonomy" id="4524"/>
    <lineage>
        <taxon>Eukaryota</taxon>
        <taxon>Viridiplantae</taxon>
        <taxon>Streptophyta</taxon>
        <taxon>Embryophyta</taxon>
        <taxon>Tracheophyta</taxon>
        <taxon>Spermatophyta</taxon>
        <taxon>Magnoliopsida</taxon>
        <taxon>Liliopsida</taxon>
        <taxon>Poales</taxon>
        <taxon>Poaceae</taxon>
        <taxon>PACMAD clade</taxon>
        <taxon>Panicoideae</taxon>
        <taxon>Panicodae</taxon>
        <taxon>Paniceae</taxon>
        <taxon>Neurachninae</taxon>
        <taxon>Neurachne</taxon>
    </lineage>
</organism>
<name>RBL_NEUMU</name>
<gene>
    <name evidence="1" type="primary">rbcL</name>
</gene>